<protein>
    <recommendedName>
        <fullName>Flagellar motor switch protein FliG</fullName>
    </recommendedName>
</protein>
<comment type="function">
    <text evidence="1">FliG is one of three proteins (FliG, FliN, FliM) that forms the rotor-mounted switch complex (C ring), located at the base of the basal body. This complex interacts with the CheY and CheZ chemotaxis proteins, in addition to contacting components of the motor that determine the direction of flagellar rotation (By similarity).</text>
</comment>
<comment type="subcellular location">
    <subcellularLocation>
        <location evidence="1">Cell inner membrane</location>
        <topology evidence="1">Peripheral membrane protein</topology>
        <orientation evidence="1">Cytoplasmic side</orientation>
    </subcellularLocation>
    <subcellularLocation>
        <location evidence="1">Bacterial flagellum basal body</location>
    </subcellularLocation>
</comment>
<comment type="similarity">
    <text evidence="2">Belongs to the FliG family.</text>
</comment>
<dbReference type="EMBL" id="U63290">
    <property type="protein sequence ID" value="AAC45324.1"/>
    <property type="molecule type" value="Genomic_DNA"/>
</dbReference>
<dbReference type="EMBL" id="U95165">
    <property type="protein sequence ID" value="AAB71779.1"/>
    <property type="molecule type" value="Genomic_DNA"/>
</dbReference>
<dbReference type="EMBL" id="AE007869">
    <property type="protein sequence ID" value="AAK86375.1"/>
    <property type="molecule type" value="Genomic_DNA"/>
</dbReference>
<dbReference type="PIR" id="AF2645">
    <property type="entry name" value="AF2645"/>
</dbReference>
<dbReference type="PIR" id="F97427">
    <property type="entry name" value="F97427"/>
</dbReference>
<dbReference type="RefSeq" id="NP_353590.1">
    <property type="nucleotide sequence ID" value="NC_003062.2"/>
</dbReference>
<dbReference type="RefSeq" id="WP_006313028.1">
    <property type="nucleotide sequence ID" value="NC_003062.2"/>
</dbReference>
<dbReference type="SMR" id="Q44458"/>
<dbReference type="STRING" id="176299.Atu0563"/>
<dbReference type="EnsemblBacteria" id="AAK86375">
    <property type="protein sequence ID" value="AAK86375"/>
    <property type="gene ID" value="Atu0563"/>
</dbReference>
<dbReference type="GeneID" id="1132601"/>
<dbReference type="KEGG" id="atu:Atu0563"/>
<dbReference type="PATRIC" id="fig|176299.10.peg.559"/>
<dbReference type="eggNOG" id="COG1536">
    <property type="taxonomic scope" value="Bacteria"/>
</dbReference>
<dbReference type="HOGENOM" id="CLU_047835_0_1_5"/>
<dbReference type="OrthoDB" id="9780302at2"/>
<dbReference type="PhylomeDB" id="Q44458"/>
<dbReference type="BioCyc" id="AGRO:ATU0563-MONOMER"/>
<dbReference type="Proteomes" id="UP000000813">
    <property type="component" value="Chromosome circular"/>
</dbReference>
<dbReference type="GO" id="GO:0009425">
    <property type="term" value="C:bacterial-type flagellum basal body"/>
    <property type="evidence" value="ECO:0007669"/>
    <property type="project" value="UniProtKB-SubCell"/>
</dbReference>
<dbReference type="GO" id="GO:0005886">
    <property type="term" value="C:plasma membrane"/>
    <property type="evidence" value="ECO:0007669"/>
    <property type="project" value="UniProtKB-SubCell"/>
</dbReference>
<dbReference type="GO" id="GO:0003774">
    <property type="term" value="F:cytoskeletal motor activity"/>
    <property type="evidence" value="ECO:0007669"/>
    <property type="project" value="InterPro"/>
</dbReference>
<dbReference type="GO" id="GO:0071973">
    <property type="term" value="P:bacterial-type flagellum-dependent cell motility"/>
    <property type="evidence" value="ECO:0007669"/>
    <property type="project" value="InterPro"/>
</dbReference>
<dbReference type="GO" id="GO:0006935">
    <property type="term" value="P:chemotaxis"/>
    <property type="evidence" value="ECO:0000315"/>
    <property type="project" value="GO_Central"/>
</dbReference>
<dbReference type="FunFam" id="1.10.220.30:FF:000016">
    <property type="entry name" value="Flagellar motor switch protein FliG"/>
    <property type="match status" value="1"/>
</dbReference>
<dbReference type="Gene3D" id="1.10.220.30">
    <property type="match status" value="3"/>
</dbReference>
<dbReference type="InterPro" id="IPR000090">
    <property type="entry name" value="Flg_Motor_Flig"/>
</dbReference>
<dbReference type="InterPro" id="IPR023087">
    <property type="entry name" value="Flg_Motor_Flig_C"/>
</dbReference>
<dbReference type="InterPro" id="IPR011002">
    <property type="entry name" value="FliG_a-hlx"/>
</dbReference>
<dbReference type="InterPro" id="IPR032779">
    <property type="entry name" value="FliG_M"/>
</dbReference>
<dbReference type="InterPro" id="IPR028263">
    <property type="entry name" value="FliG_N"/>
</dbReference>
<dbReference type="NCBIfam" id="NF004260">
    <property type="entry name" value="PRK05686.2-1"/>
    <property type="match status" value="1"/>
</dbReference>
<dbReference type="PANTHER" id="PTHR30534">
    <property type="entry name" value="FLAGELLAR MOTOR SWITCH PROTEIN FLIG"/>
    <property type="match status" value="1"/>
</dbReference>
<dbReference type="PANTHER" id="PTHR30534:SF0">
    <property type="entry name" value="FLAGELLAR MOTOR SWITCH PROTEIN FLIG"/>
    <property type="match status" value="1"/>
</dbReference>
<dbReference type="Pfam" id="PF01706">
    <property type="entry name" value="FliG_C"/>
    <property type="match status" value="1"/>
</dbReference>
<dbReference type="Pfam" id="PF14841">
    <property type="entry name" value="FliG_M"/>
    <property type="match status" value="1"/>
</dbReference>
<dbReference type="Pfam" id="PF14842">
    <property type="entry name" value="FliG_N"/>
    <property type="match status" value="1"/>
</dbReference>
<dbReference type="PRINTS" id="PR00954">
    <property type="entry name" value="FLGMOTORFLIG"/>
</dbReference>
<dbReference type="SUPFAM" id="SSF48029">
    <property type="entry name" value="FliG"/>
    <property type="match status" value="2"/>
</dbReference>
<organism>
    <name type="scientific">Agrobacterium fabrum (strain C58 / ATCC 33970)</name>
    <name type="common">Agrobacterium tumefaciens (strain C58)</name>
    <dbReference type="NCBI Taxonomy" id="176299"/>
    <lineage>
        <taxon>Bacteria</taxon>
        <taxon>Pseudomonadati</taxon>
        <taxon>Pseudomonadota</taxon>
        <taxon>Alphaproteobacteria</taxon>
        <taxon>Hyphomicrobiales</taxon>
        <taxon>Rhizobiaceae</taxon>
        <taxon>Rhizobium/Agrobacterium group</taxon>
        <taxon>Agrobacterium</taxon>
        <taxon>Agrobacterium tumefaciens complex</taxon>
    </lineage>
</organism>
<proteinExistence type="inferred from homology"/>
<accession>Q44458</accession>
<sequence length="347" mass="38107">MMDFEDFGNPLAGKPLSQADKAAAVLLAMGKGVAGKLLKFFTQHELQMIISSAQTLRVIPPDELAQIVAEFEDLFTEGTGLMDNAKAIESILEEGLTPEEVDSLLGRRAAFQAYEASIWDRLQEAEPEFVGKFLLREHPQTIAYILSMLPSSFGAKVLLTIPEEQRADIMNRTVNMKEVSPTAAQIIEKRVVNLINEIEAERNAGGSTKVADLMNELDKPQVDTLLSSLETLSKEAANKVKPKIFLFDDLMFMPQRSRVLLLNDVSADVLTMALRGATVEIKECVLSSISPRQRRMIESDLAVPQASLNTREVAIARRAVAQEAIRLANSGQIQLKDVAAEEQSAAA</sequence>
<name>FLIG_AGRFC</name>
<gene>
    <name type="primary">fliG</name>
    <name type="ordered locus">Atu0563</name>
    <name type="ORF">AGR_C_989</name>
</gene>
<keyword id="KW-0975">Bacterial flagellum</keyword>
<keyword id="KW-0997">Cell inner membrane</keyword>
<keyword id="KW-1003">Cell membrane</keyword>
<keyword id="KW-0145">Chemotaxis</keyword>
<keyword id="KW-0283">Flagellar rotation</keyword>
<keyword id="KW-0472">Membrane</keyword>
<keyword id="KW-1185">Reference proteome</keyword>
<feature type="chain" id="PRO_0000184080" description="Flagellar motor switch protein FliG">
    <location>
        <begin position="1"/>
        <end position="347"/>
    </location>
</feature>
<feature type="short sequence motif" description="Part of the EHPQR-motif">
    <location>
        <begin position="137"/>
        <end position="140"/>
    </location>
</feature>
<feature type="site" description="Part of the EHPQR-motif">
    <location>
        <position position="172"/>
    </location>
</feature>
<feature type="sequence conflict" description="In Ref. 1; AAC45324/AAB71779." evidence="2" ref="1">
    <original>AVAQEAIRLANSGQIQLKDVAAEEQSAAA</original>
    <variation>RWRRRRSGSPIPARSS</variation>
    <location>
        <begin position="319"/>
        <end position="347"/>
    </location>
</feature>
<evidence type="ECO:0000250" key="1"/>
<evidence type="ECO:0000305" key="2"/>
<reference key="1">
    <citation type="journal article" date="1997" name="Gene">
        <title>The Agrobacterium tumefaciens motor gene, motA, is in a linked cluster with the flagellar switch protein genes, fliG, fliM and fliN.</title>
        <authorList>
            <person name="Deakin W.J."/>
            <person name="Parker V.E."/>
            <person name="Loake G.J."/>
            <person name="Shaw C.H."/>
        </authorList>
    </citation>
    <scope>NUCLEOTIDE SEQUENCE [GENOMIC DNA]</scope>
</reference>
<reference key="2">
    <citation type="journal article" date="2001" name="Science">
        <title>The genome of the natural genetic engineer Agrobacterium tumefaciens C58.</title>
        <authorList>
            <person name="Wood D.W."/>
            <person name="Setubal J.C."/>
            <person name="Kaul R."/>
            <person name="Monks D.E."/>
            <person name="Kitajima J.P."/>
            <person name="Okura V.K."/>
            <person name="Zhou Y."/>
            <person name="Chen L."/>
            <person name="Wood G.E."/>
            <person name="Almeida N.F. Jr."/>
            <person name="Woo L."/>
            <person name="Chen Y."/>
            <person name="Paulsen I.T."/>
            <person name="Eisen J.A."/>
            <person name="Karp P.D."/>
            <person name="Bovee D. Sr."/>
            <person name="Chapman P."/>
            <person name="Clendenning J."/>
            <person name="Deatherage G."/>
            <person name="Gillet W."/>
            <person name="Grant C."/>
            <person name="Kutyavin T."/>
            <person name="Levy R."/>
            <person name="Li M.-J."/>
            <person name="McClelland E."/>
            <person name="Palmieri A."/>
            <person name="Raymond C."/>
            <person name="Rouse G."/>
            <person name="Saenphimmachak C."/>
            <person name="Wu Z."/>
            <person name="Romero P."/>
            <person name="Gordon D."/>
            <person name="Zhang S."/>
            <person name="Yoo H."/>
            <person name="Tao Y."/>
            <person name="Biddle P."/>
            <person name="Jung M."/>
            <person name="Krespan W."/>
            <person name="Perry M."/>
            <person name="Gordon-Kamm B."/>
            <person name="Liao L."/>
            <person name="Kim S."/>
            <person name="Hendrick C."/>
            <person name="Zhao Z.-Y."/>
            <person name="Dolan M."/>
            <person name="Chumley F."/>
            <person name="Tingey S.V."/>
            <person name="Tomb J.-F."/>
            <person name="Gordon M.P."/>
            <person name="Olson M.V."/>
            <person name="Nester E.W."/>
        </authorList>
    </citation>
    <scope>NUCLEOTIDE SEQUENCE [LARGE SCALE GENOMIC DNA]</scope>
    <source>
        <strain>C58 / ATCC 33970</strain>
    </source>
</reference>
<reference key="3">
    <citation type="journal article" date="2001" name="Science">
        <title>Genome sequence of the plant pathogen and biotechnology agent Agrobacterium tumefaciens C58.</title>
        <authorList>
            <person name="Goodner B."/>
            <person name="Hinkle G."/>
            <person name="Gattung S."/>
            <person name="Miller N."/>
            <person name="Blanchard M."/>
            <person name="Qurollo B."/>
            <person name="Goldman B.S."/>
            <person name="Cao Y."/>
            <person name="Askenazi M."/>
            <person name="Halling C."/>
            <person name="Mullin L."/>
            <person name="Houmiel K."/>
            <person name="Gordon J."/>
            <person name="Vaudin M."/>
            <person name="Iartchouk O."/>
            <person name="Epp A."/>
            <person name="Liu F."/>
            <person name="Wollam C."/>
            <person name="Allinger M."/>
            <person name="Doughty D."/>
            <person name="Scott C."/>
            <person name="Lappas C."/>
            <person name="Markelz B."/>
            <person name="Flanagan C."/>
            <person name="Crowell C."/>
            <person name="Gurson J."/>
            <person name="Lomo C."/>
            <person name="Sear C."/>
            <person name="Strub G."/>
            <person name="Cielo C."/>
            <person name="Slater S."/>
        </authorList>
    </citation>
    <scope>NUCLEOTIDE SEQUENCE [LARGE SCALE GENOMIC DNA]</scope>
    <source>
        <strain>C58 / ATCC 33970</strain>
    </source>
</reference>